<dbReference type="EMBL" id="CP002685">
    <property type="protein sequence ID" value="AEC09870.1"/>
    <property type="molecule type" value="Genomic_DNA"/>
</dbReference>
<dbReference type="EMBL" id="DQ056575">
    <property type="protein sequence ID" value="AAY78725.1"/>
    <property type="molecule type" value="mRNA"/>
</dbReference>
<dbReference type="PIR" id="C84833">
    <property type="entry name" value="C84833"/>
</dbReference>
<dbReference type="RefSeq" id="NP_181606.1">
    <molecule id="Q9SHB5-1"/>
    <property type="nucleotide sequence ID" value="NM_129636.3"/>
</dbReference>
<dbReference type="SMR" id="Q9SHB5"/>
<dbReference type="BioGRID" id="4007">
    <property type="interactions" value="3"/>
</dbReference>
<dbReference type="FunCoup" id="Q9SHB5">
    <property type="interactions" value="3"/>
</dbReference>
<dbReference type="STRING" id="3702.Q9SHB5"/>
<dbReference type="GlyGen" id="Q9SHB5">
    <property type="glycosylation" value="1 site"/>
</dbReference>
<dbReference type="iPTMnet" id="Q9SHB5"/>
<dbReference type="PaxDb" id="3702-AT2G40740.1"/>
<dbReference type="ProteomicsDB" id="234347">
    <molecule id="Q9SHB5-1"/>
</dbReference>
<dbReference type="EnsemblPlants" id="AT2G40740.1">
    <molecule id="Q9SHB5-1"/>
    <property type="protein sequence ID" value="AT2G40740.1"/>
    <property type="gene ID" value="AT2G40740"/>
</dbReference>
<dbReference type="GeneID" id="818669"/>
<dbReference type="Gramene" id="AT2G40740.1">
    <molecule id="Q9SHB5-1"/>
    <property type="protein sequence ID" value="AT2G40740.1"/>
    <property type="gene ID" value="AT2G40740"/>
</dbReference>
<dbReference type="KEGG" id="ath:AT2G40740"/>
<dbReference type="Araport" id="AT2G40740"/>
<dbReference type="TAIR" id="AT2G40740">
    <property type="gene designation" value="WRKY55"/>
</dbReference>
<dbReference type="eggNOG" id="ENOG502RSM6">
    <property type="taxonomic scope" value="Eukaryota"/>
</dbReference>
<dbReference type="HOGENOM" id="CLU_052574_0_0_1"/>
<dbReference type="InParanoid" id="Q9SHB5"/>
<dbReference type="OMA" id="MQIEPDL"/>
<dbReference type="PhylomeDB" id="Q9SHB5"/>
<dbReference type="PRO" id="PR:Q9SHB5"/>
<dbReference type="Proteomes" id="UP000006548">
    <property type="component" value="Chromosome 2"/>
</dbReference>
<dbReference type="ExpressionAtlas" id="Q9SHB5">
    <property type="expression patterns" value="baseline and differential"/>
</dbReference>
<dbReference type="GO" id="GO:0005634">
    <property type="term" value="C:nucleus"/>
    <property type="evidence" value="ECO:0007669"/>
    <property type="project" value="UniProtKB-SubCell"/>
</dbReference>
<dbReference type="GO" id="GO:0003700">
    <property type="term" value="F:DNA-binding transcription factor activity"/>
    <property type="evidence" value="ECO:0000250"/>
    <property type="project" value="TAIR"/>
</dbReference>
<dbReference type="GO" id="GO:0043565">
    <property type="term" value="F:sequence-specific DNA binding"/>
    <property type="evidence" value="ECO:0000314"/>
    <property type="project" value="TAIR"/>
</dbReference>
<dbReference type="GO" id="GO:0000976">
    <property type="term" value="F:transcription cis-regulatory region binding"/>
    <property type="evidence" value="ECO:0000353"/>
    <property type="project" value="TAIR"/>
</dbReference>
<dbReference type="GO" id="GO:0010468">
    <property type="term" value="P:regulation of gene expression"/>
    <property type="evidence" value="ECO:0000315"/>
    <property type="project" value="TAIR"/>
</dbReference>
<dbReference type="FunFam" id="2.20.25.80:FF:000014">
    <property type="entry name" value="WRKY transcription factor 55"/>
    <property type="match status" value="1"/>
</dbReference>
<dbReference type="Gene3D" id="2.20.25.80">
    <property type="entry name" value="WRKY domain"/>
    <property type="match status" value="1"/>
</dbReference>
<dbReference type="InterPro" id="IPR003657">
    <property type="entry name" value="WRKY_dom"/>
</dbReference>
<dbReference type="InterPro" id="IPR036576">
    <property type="entry name" value="WRKY_dom_sf"/>
</dbReference>
<dbReference type="InterPro" id="IPR044810">
    <property type="entry name" value="WRKY_plant"/>
</dbReference>
<dbReference type="PANTHER" id="PTHR31282">
    <property type="entry name" value="WRKY TRANSCRIPTION FACTOR 21-RELATED"/>
    <property type="match status" value="1"/>
</dbReference>
<dbReference type="Pfam" id="PF03106">
    <property type="entry name" value="WRKY"/>
    <property type="match status" value="1"/>
</dbReference>
<dbReference type="SMART" id="SM00774">
    <property type="entry name" value="WRKY"/>
    <property type="match status" value="1"/>
</dbReference>
<dbReference type="SUPFAM" id="SSF118290">
    <property type="entry name" value="WRKY DNA-binding domain"/>
    <property type="match status" value="1"/>
</dbReference>
<dbReference type="PROSITE" id="PS50811">
    <property type="entry name" value="WRKY"/>
    <property type="match status" value="1"/>
</dbReference>
<reference key="1">
    <citation type="journal article" date="1999" name="Nature">
        <title>Sequence and analysis of chromosome 2 of the plant Arabidopsis thaliana.</title>
        <authorList>
            <person name="Lin X."/>
            <person name="Kaul S."/>
            <person name="Rounsley S.D."/>
            <person name="Shea T.P."/>
            <person name="Benito M.-I."/>
            <person name="Town C.D."/>
            <person name="Fujii C.Y."/>
            <person name="Mason T.M."/>
            <person name="Bowman C.L."/>
            <person name="Barnstead M.E."/>
            <person name="Feldblyum T.V."/>
            <person name="Buell C.R."/>
            <person name="Ketchum K.A."/>
            <person name="Lee J.J."/>
            <person name="Ronning C.M."/>
            <person name="Koo H.L."/>
            <person name="Moffat K.S."/>
            <person name="Cronin L.A."/>
            <person name="Shen M."/>
            <person name="Pai G."/>
            <person name="Van Aken S."/>
            <person name="Umayam L."/>
            <person name="Tallon L.J."/>
            <person name="Gill J.E."/>
            <person name="Adams M.D."/>
            <person name="Carrera A.J."/>
            <person name="Creasy T.H."/>
            <person name="Goodman H.M."/>
            <person name="Somerville C.R."/>
            <person name="Copenhaver G.P."/>
            <person name="Preuss D."/>
            <person name="Nierman W.C."/>
            <person name="White O."/>
            <person name="Eisen J.A."/>
            <person name="Salzberg S.L."/>
            <person name="Fraser C.M."/>
            <person name="Venter J.C."/>
        </authorList>
    </citation>
    <scope>NUCLEOTIDE SEQUENCE [LARGE SCALE GENOMIC DNA]</scope>
    <source>
        <strain>cv. Columbia</strain>
    </source>
</reference>
<reference key="2">
    <citation type="journal article" date="2017" name="Plant J.">
        <title>Araport11: a complete reannotation of the Arabidopsis thaliana reference genome.</title>
        <authorList>
            <person name="Cheng C.Y."/>
            <person name="Krishnakumar V."/>
            <person name="Chan A.P."/>
            <person name="Thibaud-Nissen F."/>
            <person name="Schobel S."/>
            <person name="Town C.D."/>
        </authorList>
    </citation>
    <scope>GENOME REANNOTATION</scope>
    <source>
        <strain>cv. Columbia</strain>
    </source>
</reference>
<reference key="3">
    <citation type="submission" date="2005-05" db="EMBL/GenBank/DDBJ databases">
        <authorList>
            <person name="Underwood B.A."/>
            <person name="Xiao Y.-L."/>
            <person name="Moskal W.A. Jr."/>
            <person name="Monaghan E.L."/>
            <person name="Wang W."/>
            <person name="Redman J.C."/>
            <person name="Wu H.C."/>
            <person name="Utterback T."/>
            <person name="Town C.D."/>
        </authorList>
    </citation>
    <scope>NUCLEOTIDE SEQUENCE [LARGE SCALE MRNA]</scope>
    <source>
        <strain>cv. Columbia</strain>
    </source>
</reference>
<name>WRK55_ARATH</name>
<gene>
    <name type="primary">WRKY55</name>
    <name type="ordered locus">At2g40740</name>
    <name type="ORF">T7D17.8</name>
</gene>
<feature type="chain" id="PRO_0000133696" description="WRKY transcription factor 55">
    <location>
        <begin position="1"/>
        <end position="292"/>
    </location>
</feature>
<feature type="DNA-binding region" description="WRKY" evidence="2">
    <location>
        <begin position="167"/>
        <end position="235"/>
    </location>
</feature>
<feature type="region of interest" description="Disordered" evidence="3">
    <location>
        <begin position="133"/>
        <end position="155"/>
    </location>
</feature>
<evidence type="ECO:0000250" key="1"/>
<evidence type="ECO:0000255" key="2">
    <source>
        <dbReference type="PROSITE-ProRule" id="PRU00223"/>
    </source>
</evidence>
<evidence type="ECO:0000256" key="3">
    <source>
        <dbReference type="SAM" id="MobiDB-lite"/>
    </source>
</evidence>
<evidence type="ECO:0000305" key="4"/>
<accession>Q9SHB5</accession>
<accession>Q7G9H9</accession>
<keyword id="KW-0025">Alternative splicing</keyword>
<keyword id="KW-0238">DNA-binding</keyword>
<keyword id="KW-0539">Nucleus</keyword>
<keyword id="KW-1185">Reference proteome</keyword>
<keyword id="KW-0804">Transcription</keyword>
<keyword id="KW-0805">Transcription regulation</keyword>
<comment type="function">
    <text evidence="1">Transcription factor. Interacts specifically with the W box (5'-(T)TGAC[CT]-3'), a frequently occurring elicitor-responsive cis-acting element (By similarity).</text>
</comment>
<comment type="subcellular location">
    <subcellularLocation>
        <location evidence="4">Nucleus</location>
    </subcellularLocation>
</comment>
<comment type="alternative products">
    <event type="alternative splicing"/>
    <isoform>
        <id>Q9SHB5-1</id>
        <name>1</name>
        <sequence type="displayed"/>
    </isoform>
    <text>A number of isoforms are produced. According to EST sequences.</text>
</comment>
<comment type="similarity">
    <text evidence="4">Belongs to the WRKY group III family.</text>
</comment>
<sequence>MYSYKKISYQMEEVMSMIFHGMKLVKSLESSLPEKPPESLLTSLDEIVKTFSDANERLKMLLEIKNSETALNKTKPVIVSVANQMLMQMEPGLMQEYWLRYGGSTSSQGTEAMFQTQLMAVDGGGERNLTAAVERSGASGSSTPRQRRRKDEGEEQTVLVAALRTGNTDLPPDDNHTWRKYGQKEILGSRFPRAYYRCTHQKLYNCPAKKQVQRLNDDPFTFRVTYRGSHTCYNSTAPTASSATPSTIPISSVTTGHSVDYGLAVVDMADVMFGSGGVGTNMDFIFPKNDPS</sequence>
<protein>
    <recommendedName>
        <fullName>WRKY transcription factor 55</fullName>
    </recommendedName>
    <alternativeName>
        <fullName>WRKY DNA-binding protein 55</fullName>
    </alternativeName>
</protein>
<organism>
    <name type="scientific">Arabidopsis thaliana</name>
    <name type="common">Mouse-ear cress</name>
    <dbReference type="NCBI Taxonomy" id="3702"/>
    <lineage>
        <taxon>Eukaryota</taxon>
        <taxon>Viridiplantae</taxon>
        <taxon>Streptophyta</taxon>
        <taxon>Embryophyta</taxon>
        <taxon>Tracheophyta</taxon>
        <taxon>Spermatophyta</taxon>
        <taxon>Magnoliopsida</taxon>
        <taxon>eudicotyledons</taxon>
        <taxon>Gunneridae</taxon>
        <taxon>Pentapetalae</taxon>
        <taxon>rosids</taxon>
        <taxon>malvids</taxon>
        <taxon>Brassicales</taxon>
        <taxon>Brassicaceae</taxon>
        <taxon>Camelineae</taxon>
        <taxon>Arabidopsis</taxon>
    </lineage>
</organism>
<proteinExistence type="evidence at transcript level"/>